<dbReference type="EC" id="2.1.1.228" evidence="1"/>
<dbReference type="EMBL" id="CP001127">
    <property type="protein sequence ID" value="ACF92930.1"/>
    <property type="molecule type" value="Genomic_DNA"/>
</dbReference>
<dbReference type="RefSeq" id="WP_000469807.1">
    <property type="nucleotide sequence ID" value="NC_011094.1"/>
</dbReference>
<dbReference type="SMR" id="B4TS54"/>
<dbReference type="KEGG" id="sew:SeSA_A2869"/>
<dbReference type="HOGENOM" id="CLU_047363_0_1_6"/>
<dbReference type="Proteomes" id="UP000001865">
    <property type="component" value="Chromosome"/>
</dbReference>
<dbReference type="GO" id="GO:0005829">
    <property type="term" value="C:cytosol"/>
    <property type="evidence" value="ECO:0007669"/>
    <property type="project" value="TreeGrafter"/>
</dbReference>
<dbReference type="GO" id="GO:0052906">
    <property type="term" value="F:tRNA (guanine(37)-N1)-methyltransferase activity"/>
    <property type="evidence" value="ECO:0007669"/>
    <property type="project" value="UniProtKB-UniRule"/>
</dbReference>
<dbReference type="GO" id="GO:0002939">
    <property type="term" value="P:tRNA N1-guanine methylation"/>
    <property type="evidence" value="ECO:0007669"/>
    <property type="project" value="TreeGrafter"/>
</dbReference>
<dbReference type="CDD" id="cd18080">
    <property type="entry name" value="TrmD-like"/>
    <property type="match status" value="1"/>
</dbReference>
<dbReference type="FunFam" id="1.10.1270.20:FF:000001">
    <property type="entry name" value="tRNA (guanine-N(1)-)-methyltransferase"/>
    <property type="match status" value="1"/>
</dbReference>
<dbReference type="FunFam" id="3.40.1280.10:FF:000001">
    <property type="entry name" value="tRNA (guanine-N(1)-)-methyltransferase"/>
    <property type="match status" value="1"/>
</dbReference>
<dbReference type="Gene3D" id="3.40.1280.10">
    <property type="match status" value="1"/>
</dbReference>
<dbReference type="Gene3D" id="1.10.1270.20">
    <property type="entry name" value="tRNA(m1g37)methyltransferase, domain 2"/>
    <property type="match status" value="1"/>
</dbReference>
<dbReference type="HAMAP" id="MF_00605">
    <property type="entry name" value="TrmD"/>
    <property type="match status" value="1"/>
</dbReference>
<dbReference type="InterPro" id="IPR029028">
    <property type="entry name" value="Alpha/beta_knot_MTases"/>
</dbReference>
<dbReference type="InterPro" id="IPR023148">
    <property type="entry name" value="tRNA_m1G_MeTrfase_C_sf"/>
</dbReference>
<dbReference type="InterPro" id="IPR002649">
    <property type="entry name" value="tRNA_m1G_MeTrfase_TrmD"/>
</dbReference>
<dbReference type="InterPro" id="IPR029026">
    <property type="entry name" value="tRNA_m1G_MTases_N"/>
</dbReference>
<dbReference type="InterPro" id="IPR016009">
    <property type="entry name" value="tRNA_MeTrfase_TRMD/TRM10"/>
</dbReference>
<dbReference type="NCBIfam" id="NF000648">
    <property type="entry name" value="PRK00026.1"/>
    <property type="match status" value="1"/>
</dbReference>
<dbReference type="NCBIfam" id="TIGR00088">
    <property type="entry name" value="trmD"/>
    <property type="match status" value="1"/>
</dbReference>
<dbReference type="PANTHER" id="PTHR46417">
    <property type="entry name" value="TRNA (GUANINE-N(1)-)-METHYLTRANSFERASE"/>
    <property type="match status" value="1"/>
</dbReference>
<dbReference type="PANTHER" id="PTHR46417:SF1">
    <property type="entry name" value="TRNA (GUANINE-N(1)-)-METHYLTRANSFERASE"/>
    <property type="match status" value="1"/>
</dbReference>
<dbReference type="Pfam" id="PF01746">
    <property type="entry name" value="tRNA_m1G_MT"/>
    <property type="match status" value="1"/>
</dbReference>
<dbReference type="PIRSF" id="PIRSF000386">
    <property type="entry name" value="tRNA_mtase"/>
    <property type="match status" value="1"/>
</dbReference>
<dbReference type="SUPFAM" id="SSF75217">
    <property type="entry name" value="alpha/beta knot"/>
    <property type="match status" value="1"/>
</dbReference>
<organism>
    <name type="scientific">Salmonella schwarzengrund (strain CVM19633)</name>
    <dbReference type="NCBI Taxonomy" id="439843"/>
    <lineage>
        <taxon>Bacteria</taxon>
        <taxon>Pseudomonadati</taxon>
        <taxon>Pseudomonadota</taxon>
        <taxon>Gammaproteobacteria</taxon>
        <taxon>Enterobacterales</taxon>
        <taxon>Enterobacteriaceae</taxon>
        <taxon>Salmonella</taxon>
    </lineage>
</organism>
<name>TRMD_SALSV</name>
<proteinExistence type="inferred from homology"/>
<gene>
    <name evidence="1" type="primary">trmD</name>
    <name type="ordered locus">SeSA_A2869</name>
</gene>
<reference key="1">
    <citation type="journal article" date="2011" name="J. Bacteriol.">
        <title>Comparative genomics of 28 Salmonella enterica isolates: evidence for CRISPR-mediated adaptive sublineage evolution.</title>
        <authorList>
            <person name="Fricke W.F."/>
            <person name="Mammel M.K."/>
            <person name="McDermott P.F."/>
            <person name="Tartera C."/>
            <person name="White D.G."/>
            <person name="Leclerc J.E."/>
            <person name="Ravel J."/>
            <person name="Cebula T.A."/>
        </authorList>
    </citation>
    <scope>NUCLEOTIDE SEQUENCE [LARGE SCALE GENOMIC DNA]</scope>
    <source>
        <strain>CVM19633</strain>
    </source>
</reference>
<feature type="chain" id="PRO_1000130207" description="tRNA (guanine-N(1)-)-methyltransferase">
    <location>
        <begin position="1"/>
        <end position="255"/>
    </location>
</feature>
<feature type="binding site" evidence="1">
    <location>
        <position position="113"/>
    </location>
    <ligand>
        <name>S-adenosyl-L-methionine</name>
        <dbReference type="ChEBI" id="CHEBI:59789"/>
    </ligand>
</feature>
<feature type="binding site" evidence="1">
    <location>
        <begin position="133"/>
        <end position="138"/>
    </location>
    <ligand>
        <name>S-adenosyl-L-methionine</name>
        <dbReference type="ChEBI" id="CHEBI:59789"/>
    </ligand>
</feature>
<evidence type="ECO:0000255" key="1">
    <source>
        <dbReference type="HAMAP-Rule" id="MF_00605"/>
    </source>
</evidence>
<accession>B4TS54</accession>
<protein>
    <recommendedName>
        <fullName evidence="1">tRNA (guanine-N(1)-)-methyltransferase</fullName>
        <ecNumber evidence="1">2.1.1.228</ecNumber>
    </recommendedName>
    <alternativeName>
        <fullName evidence="1">M1G-methyltransferase</fullName>
    </alternativeName>
    <alternativeName>
        <fullName evidence="1">tRNA [GM37] methyltransferase</fullName>
    </alternativeName>
</protein>
<keyword id="KW-0963">Cytoplasm</keyword>
<keyword id="KW-0489">Methyltransferase</keyword>
<keyword id="KW-0949">S-adenosyl-L-methionine</keyword>
<keyword id="KW-0808">Transferase</keyword>
<keyword id="KW-0819">tRNA processing</keyword>
<sequence length="255" mass="28378">MFIGIVSLFPEMFRAITDYGVTGRAVKKGLLNIQSWSPRDFTHDRHRTVDDRPYGGGPGMLMMVQPLRDAIHAAKAAAGEGAKVIYLSPQGRKLDQAGVSELATNQKLILVCGRYEGVDERVIQTEIDEEWSIGDYVLSGGELPAMTLIDSVARFIPGVLGHEASAIEDSFADGLLDCPHYTRPEVLEGMEVPPVLLSGNHAEIRRWRLKQSLGRTWLRRPELLENLALTEEQARLLAEFKTEHAQQQHKHDGMA</sequence>
<comment type="function">
    <text evidence="1">Specifically methylates guanosine-37 in various tRNAs.</text>
</comment>
<comment type="catalytic activity">
    <reaction evidence="1">
        <text>guanosine(37) in tRNA + S-adenosyl-L-methionine = N(1)-methylguanosine(37) in tRNA + S-adenosyl-L-homocysteine + H(+)</text>
        <dbReference type="Rhea" id="RHEA:36899"/>
        <dbReference type="Rhea" id="RHEA-COMP:10145"/>
        <dbReference type="Rhea" id="RHEA-COMP:10147"/>
        <dbReference type="ChEBI" id="CHEBI:15378"/>
        <dbReference type="ChEBI" id="CHEBI:57856"/>
        <dbReference type="ChEBI" id="CHEBI:59789"/>
        <dbReference type="ChEBI" id="CHEBI:73542"/>
        <dbReference type="ChEBI" id="CHEBI:74269"/>
        <dbReference type="EC" id="2.1.1.228"/>
    </reaction>
</comment>
<comment type="subunit">
    <text evidence="1">Homodimer.</text>
</comment>
<comment type="subcellular location">
    <subcellularLocation>
        <location evidence="1">Cytoplasm</location>
    </subcellularLocation>
</comment>
<comment type="similarity">
    <text evidence="1">Belongs to the RNA methyltransferase TrmD family.</text>
</comment>